<reference key="1">
    <citation type="submission" date="2007-03" db="EMBL/GenBank/DDBJ databases">
        <title>Complete sequence of chromosome 1 of Burkholderia vietnamiensis G4.</title>
        <authorList>
            <consortium name="US DOE Joint Genome Institute"/>
            <person name="Copeland A."/>
            <person name="Lucas S."/>
            <person name="Lapidus A."/>
            <person name="Barry K."/>
            <person name="Detter J.C."/>
            <person name="Glavina del Rio T."/>
            <person name="Hammon N."/>
            <person name="Israni S."/>
            <person name="Dalin E."/>
            <person name="Tice H."/>
            <person name="Pitluck S."/>
            <person name="Chain P."/>
            <person name="Malfatti S."/>
            <person name="Shin M."/>
            <person name="Vergez L."/>
            <person name="Schmutz J."/>
            <person name="Larimer F."/>
            <person name="Land M."/>
            <person name="Hauser L."/>
            <person name="Kyrpides N."/>
            <person name="Tiedje J."/>
            <person name="Richardson P."/>
        </authorList>
    </citation>
    <scope>NUCLEOTIDE SEQUENCE [LARGE SCALE GENOMIC DNA]</scope>
    <source>
        <strain>G4 / LMG 22486</strain>
    </source>
</reference>
<gene>
    <name evidence="1" type="primary">gltX</name>
    <name type="ordered locus">Bcep1808_1962</name>
</gene>
<feature type="chain" id="PRO_1000001884" description="Glutamate--tRNA ligase">
    <location>
        <begin position="1"/>
        <end position="469"/>
    </location>
</feature>
<feature type="region of interest" description="Disordered" evidence="2">
    <location>
        <begin position="118"/>
        <end position="138"/>
    </location>
</feature>
<feature type="short sequence motif" description="'HIGH' region" evidence="1">
    <location>
        <begin position="11"/>
        <end position="21"/>
    </location>
</feature>
<feature type="short sequence motif" description="'KMSKS' region" evidence="1">
    <location>
        <begin position="243"/>
        <end position="247"/>
    </location>
</feature>
<feature type="compositionally biased region" description="Basic and acidic residues" evidence="2">
    <location>
        <begin position="118"/>
        <end position="131"/>
    </location>
</feature>
<feature type="binding site" evidence="1">
    <location>
        <position position="246"/>
    </location>
    <ligand>
        <name>ATP</name>
        <dbReference type="ChEBI" id="CHEBI:30616"/>
    </ligand>
</feature>
<dbReference type="EC" id="6.1.1.17" evidence="1"/>
<dbReference type="EMBL" id="CP000614">
    <property type="protein sequence ID" value="ABO54965.1"/>
    <property type="molecule type" value="Genomic_DNA"/>
</dbReference>
<dbReference type="SMR" id="A4JFB2"/>
<dbReference type="KEGG" id="bvi:Bcep1808_1962"/>
<dbReference type="eggNOG" id="COG0008">
    <property type="taxonomic scope" value="Bacteria"/>
</dbReference>
<dbReference type="HOGENOM" id="CLU_015768_6_0_4"/>
<dbReference type="Proteomes" id="UP000002287">
    <property type="component" value="Chromosome 1"/>
</dbReference>
<dbReference type="GO" id="GO:0005829">
    <property type="term" value="C:cytosol"/>
    <property type="evidence" value="ECO:0007669"/>
    <property type="project" value="TreeGrafter"/>
</dbReference>
<dbReference type="GO" id="GO:0005524">
    <property type="term" value="F:ATP binding"/>
    <property type="evidence" value="ECO:0007669"/>
    <property type="project" value="UniProtKB-UniRule"/>
</dbReference>
<dbReference type="GO" id="GO:0004818">
    <property type="term" value="F:glutamate-tRNA ligase activity"/>
    <property type="evidence" value="ECO:0007669"/>
    <property type="project" value="UniProtKB-UniRule"/>
</dbReference>
<dbReference type="GO" id="GO:0000049">
    <property type="term" value="F:tRNA binding"/>
    <property type="evidence" value="ECO:0007669"/>
    <property type="project" value="InterPro"/>
</dbReference>
<dbReference type="GO" id="GO:0008270">
    <property type="term" value="F:zinc ion binding"/>
    <property type="evidence" value="ECO:0007669"/>
    <property type="project" value="InterPro"/>
</dbReference>
<dbReference type="GO" id="GO:0006424">
    <property type="term" value="P:glutamyl-tRNA aminoacylation"/>
    <property type="evidence" value="ECO:0007669"/>
    <property type="project" value="UniProtKB-UniRule"/>
</dbReference>
<dbReference type="CDD" id="cd00808">
    <property type="entry name" value="GluRS_core"/>
    <property type="match status" value="1"/>
</dbReference>
<dbReference type="FunFam" id="3.40.50.620:FF:000007">
    <property type="entry name" value="Glutamate--tRNA ligase"/>
    <property type="match status" value="1"/>
</dbReference>
<dbReference type="Gene3D" id="1.10.10.350">
    <property type="match status" value="1"/>
</dbReference>
<dbReference type="Gene3D" id="1.10.8.70">
    <property type="entry name" value="Glutamate-tRNA synthetase, class I, anticodon-binding domain 1"/>
    <property type="match status" value="1"/>
</dbReference>
<dbReference type="Gene3D" id="3.40.50.620">
    <property type="entry name" value="HUPs"/>
    <property type="match status" value="1"/>
</dbReference>
<dbReference type="HAMAP" id="MF_00022">
    <property type="entry name" value="Glu_tRNA_synth_type1"/>
    <property type="match status" value="1"/>
</dbReference>
<dbReference type="InterPro" id="IPR045462">
    <property type="entry name" value="aa-tRNA-synth_I_cd-bd"/>
</dbReference>
<dbReference type="InterPro" id="IPR020751">
    <property type="entry name" value="aa-tRNA-synth_I_codon-bd_sub2"/>
</dbReference>
<dbReference type="InterPro" id="IPR001412">
    <property type="entry name" value="aa-tRNA-synth_I_CS"/>
</dbReference>
<dbReference type="InterPro" id="IPR008925">
    <property type="entry name" value="aa_tRNA-synth_I_cd-bd_sf"/>
</dbReference>
<dbReference type="InterPro" id="IPR004527">
    <property type="entry name" value="Glu-tRNA-ligase_bac/mito"/>
</dbReference>
<dbReference type="InterPro" id="IPR020752">
    <property type="entry name" value="Glu-tRNA-synth_I_codon-bd_sub1"/>
</dbReference>
<dbReference type="InterPro" id="IPR000924">
    <property type="entry name" value="Glu/Gln-tRNA-synth"/>
</dbReference>
<dbReference type="InterPro" id="IPR020058">
    <property type="entry name" value="Glu/Gln-tRNA-synth_Ib_cat-dom"/>
</dbReference>
<dbReference type="InterPro" id="IPR049940">
    <property type="entry name" value="GluQ/Sye"/>
</dbReference>
<dbReference type="InterPro" id="IPR033910">
    <property type="entry name" value="GluRS_core"/>
</dbReference>
<dbReference type="InterPro" id="IPR014729">
    <property type="entry name" value="Rossmann-like_a/b/a_fold"/>
</dbReference>
<dbReference type="NCBIfam" id="TIGR00464">
    <property type="entry name" value="gltX_bact"/>
    <property type="match status" value="1"/>
</dbReference>
<dbReference type="PANTHER" id="PTHR43311">
    <property type="entry name" value="GLUTAMATE--TRNA LIGASE"/>
    <property type="match status" value="1"/>
</dbReference>
<dbReference type="PANTHER" id="PTHR43311:SF2">
    <property type="entry name" value="GLUTAMATE--TRNA LIGASE, MITOCHONDRIAL-RELATED"/>
    <property type="match status" value="1"/>
</dbReference>
<dbReference type="Pfam" id="PF19269">
    <property type="entry name" value="Anticodon_2"/>
    <property type="match status" value="1"/>
</dbReference>
<dbReference type="Pfam" id="PF00749">
    <property type="entry name" value="tRNA-synt_1c"/>
    <property type="match status" value="1"/>
</dbReference>
<dbReference type="PRINTS" id="PR00987">
    <property type="entry name" value="TRNASYNTHGLU"/>
</dbReference>
<dbReference type="SUPFAM" id="SSF48163">
    <property type="entry name" value="An anticodon-binding domain of class I aminoacyl-tRNA synthetases"/>
    <property type="match status" value="1"/>
</dbReference>
<dbReference type="SUPFAM" id="SSF52374">
    <property type="entry name" value="Nucleotidylyl transferase"/>
    <property type="match status" value="1"/>
</dbReference>
<dbReference type="PROSITE" id="PS00178">
    <property type="entry name" value="AA_TRNA_LIGASE_I"/>
    <property type="match status" value="1"/>
</dbReference>
<comment type="function">
    <text evidence="1">Catalyzes the attachment of glutamate to tRNA(Glu) in a two-step reaction: glutamate is first activated by ATP to form Glu-AMP and then transferred to the acceptor end of tRNA(Glu).</text>
</comment>
<comment type="catalytic activity">
    <reaction evidence="1">
        <text>tRNA(Glu) + L-glutamate + ATP = L-glutamyl-tRNA(Glu) + AMP + diphosphate</text>
        <dbReference type="Rhea" id="RHEA:23540"/>
        <dbReference type="Rhea" id="RHEA-COMP:9663"/>
        <dbReference type="Rhea" id="RHEA-COMP:9680"/>
        <dbReference type="ChEBI" id="CHEBI:29985"/>
        <dbReference type="ChEBI" id="CHEBI:30616"/>
        <dbReference type="ChEBI" id="CHEBI:33019"/>
        <dbReference type="ChEBI" id="CHEBI:78442"/>
        <dbReference type="ChEBI" id="CHEBI:78520"/>
        <dbReference type="ChEBI" id="CHEBI:456215"/>
        <dbReference type="EC" id="6.1.1.17"/>
    </reaction>
</comment>
<comment type="subunit">
    <text evidence="1">Monomer.</text>
</comment>
<comment type="subcellular location">
    <subcellularLocation>
        <location evidence="1">Cytoplasm</location>
    </subcellularLocation>
</comment>
<comment type="similarity">
    <text evidence="1">Belongs to the class-I aminoacyl-tRNA synthetase family. Glutamate--tRNA ligase type 1 subfamily.</text>
</comment>
<proteinExistence type="inferred from homology"/>
<sequence length="469" mass="51751">MTRPVRTRFAPSPTGFIHLGNIRSALYPWAFARKMKGTFVLRIEDTDVERSSQEAVDAILEGMQWLGLDFDEGPIYQMQRMDRYRAVLAQMLEQGLAYPCYMSAEELDALRERQRAAGEKPRYDGTWRPEPGKVLPEPPAGVKPVLRFRNPLTGTVVWDDAVKGRVEISNEELDDLVIARPDGTPIYNFCVVVDDMDMNITHVIRGDDHVNNTPRQINILRALGGEPPVYAHLPTVLNEQGEKMSKRHGAMSVMAYRDAGFLPEAVVNYLARLGWSHGDAEIFSREQFVEWFDLEHLGKSPAQYDHSKLSWLNAHYIKEADNARLAALAKPFLDALGIDDAAIATGPALDAVIGLMKDRATTVKEIAEGAAMFYRVPAPDADALAQHVTDAVRPALADLAAALKAADWTKEAVSAALKATLATHKLKMPQLAMPVRLLVAGTTHTPSIDAVLVLFGRDAVVSRIEAALA</sequence>
<accession>A4JFB2</accession>
<evidence type="ECO:0000255" key="1">
    <source>
        <dbReference type="HAMAP-Rule" id="MF_00022"/>
    </source>
</evidence>
<evidence type="ECO:0000256" key="2">
    <source>
        <dbReference type="SAM" id="MobiDB-lite"/>
    </source>
</evidence>
<name>SYE_BURVG</name>
<organism>
    <name type="scientific">Burkholderia vietnamiensis (strain G4 / LMG 22486)</name>
    <name type="common">Burkholderia cepacia (strain R1808)</name>
    <dbReference type="NCBI Taxonomy" id="269482"/>
    <lineage>
        <taxon>Bacteria</taxon>
        <taxon>Pseudomonadati</taxon>
        <taxon>Pseudomonadota</taxon>
        <taxon>Betaproteobacteria</taxon>
        <taxon>Burkholderiales</taxon>
        <taxon>Burkholderiaceae</taxon>
        <taxon>Burkholderia</taxon>
        <taxon>Burkholderia cepacia complex</taxon>
    </lineage>
</organism>
<keyword id="KW-0030">Aminoacyl-tRNA synthetase</keyword>
<keyword id="KW-0067">ATP-binding</keyword>
<keyword id="KW-0963">Cytoplasm</keyword>
<keyword id="KW-0436">Ligase</keyword>
<keyword id="KW-0547">Nucleotide-binding</keyword>
<keyword id="KW-0648">Protein biosynthesis</keyword>
<protein>
    <recommendedName>
        <fullName evidence="1">Glutamate--tRNA ligase</fullName>
        <ecNumber evidence="1">6.1.1.17</ecNumber>
    </recommendedName>
    <alternativeName>
        <fullName evidence="1">Glutamyl-tRNA synthetase</fullName>
        <shortName evidence="1">GluRS</shortName>
    </alternativeName>
</protein>